<evidence type="ECO:0000250" key="1"/>
<evidence type="ECO:0000255" key="2"/>
<evidence type="ECO:0000269" key="3">
    <source ref="1"/>
</evidence>
<evidence type="ECO:0000305" key="4"/>
<accession>Q9SCX9</accession>
<accession>Q8RXI6</accession>
<gene>
    <name type="primary">DHAPRD</name>
    <name type="ordered locus">At5g40610</name>
    <name type="ORF">MNF13.16</name>
</gene>
<dbReference type="EC" id="1.1.1.8"/>
<dbReference type="EMBL" id="AJ242602">
    <property type="protein sequence ID" value="CAB64726.1"/>
    <property type="molecule type" value="mRNA"/>
</dbReference>
<dbReference type="EMBL" id="AB009052">
    <property type="protein sequence ID" value="BAB08532.1"/>
    <property type="molecule type" value="Genomic_DNA"/>
</dbReference>
<dbReference type="EMBL" id="CP002688">
    <property type="protein sequence ID" value="AED94573.1"/>
    <property type="molecule type" value="Genomic_DNA"/>
</dbReference>
<dbReference type="EMBL" id="BT000967">
    <property type="protein sequence ID" value="AAN41367.1"/>
    <property type="molecule type" value="mRNA"/>
</dbReference>
<dbReference type="EMBL" id="AY080863">
    <property type="protein sequence ID" value="AAL87336.1"/>
    <property type="molecule type" value="mRNA"/>
</dbReference>
<dbReference type="SMR" id="Q9SCX9"/>
<dbReference type="FunCoup" id="Q9SCX9">
    <property type="interactions" value="2169"/>
</dbReference>
<dbReference type="STRING" id="3702.Q9SCX9"/>
<dbReference type="PaxDb" id="3702-AT5G40610.1"/>
<dbReference type="ProteomicsDB" id="248463"/>
<dbReference type="EnsemblPlants" id="AT5G40610.1">
    <property type="protein sequence ID" value="AT5G40610.1"/>
    <property type="gene ID" value="AT5G40610"/>
</dbReference>
<dbReference type="Gramene" id="AT5G40610.1">
    <property type="protein sequence ID" value="AT5G40610.1"/>
    <property type="gene ID" value="AT5G40610"/>
</dbReference>
<dbReference type="KEGG" id="ath:AT5G40610"/>
<dbReference type="Araport" id="AT5G40610"/>
<dbReference type="TAIR" id="AT5G40610">
    <property type="gene designation" value="GPDHP"/>
</dbReference>
<dbReference type="eggNOG" id="KOG2711">
    <property type="taxonomic scope" value="Eukaryota"/>
</dbReference>
<dbReference type="HOGENOM" id="CLU_033449_2_2_1"/>
<dbReference type="InParanoid" id="Q9SCX9"/>
<dbReference type="OMA" id="YDTPPMD"/>
<dbReference type="PhylomeDB" id="Q9SCX9"/>
<dbReference type="UniPathway" id="UPA00940"/>
<dbReference type="PRO" id="PR:Q9SCX9"/>
<dbReference type="Proteomes" id="UP000006548">
    <property type="component" value="Chromosome 5"/>
</dbReference>
<dbReference type="ExpressionAtlas" id="Q9SCX9">
    <property type="expression patterns" value="baseline and differential"/>
</dbReference>
<dbReference type="GO" id="GO:0009507">
    <property type="term" value="C:chloroplast"/>
    <property type="evidence" value="ECO:0007669"/>
    <property type="project" value="UniProtKB-SubCell"/>
</dbReference>
<dbReference type="GO" id="GO:0141152">
    <property type="term" value="F:glycerol-3-phosphate dehydrogenase (NAD+) activity"/>
    <property type="evidence" value="ECO:0007669"/>
    <property type="project" value="UniProtKB-EC"/>
</dbReference>
<dbReference type="GO" id="GO:0051287">
    <property type="term" value="F:NAD binding"/>
    <property type="evidence" value="ECO:0007669"/>
    <property type="project" value="InterPro"/>
</dbReference>
<dbReference type="GO" id="GO:0042803">
    <property type="term" value="F:protein homodimerization activity"/>
    <property type="evidence" value="ECO:0007669"/>
    <property type="project" value="InterPro"/>
</dbReference>
<dbReference type="GO" id="GO:0005975">
    <property type="term" value="P:carbohydrate metabolic process"/>
    <property type="evidence" value="ECO:0007669"/>
    <property type="project" value="InterPro"/>
</dbReference>
<dbReference type="GO" id="GO:0046168">
    <property type="term" value="P:glycerol-3-phosphate catabolic process"/>
    <property type="evidence" value="ECO:0007669"/>
    <property type="project" value="InterPro"/>
</dbReference>
<dbReference type="GO" id="GO:0006650">
    <property type="term" value="P:glycerophospholipid metabolic process"/>
    <property type="evidence" value="ECO:0007669"/>
    <property type="project" value="UniProtKB-UniPathway"/>
</dbReference>
<dbReference type="GO" id="GO:0008654">
    <property type="term" value="P:phospholipid biosynthetic process"/>
    <property type="evidence" value="ECO:0007669"/>
    <property type="project" value="UniProtKB-KW"/>
</dbReference>
<dbReference type="FunFam" id="1.10.1040.10:FF:000004">
    <property type="entry name" value="Glycerol-3-phosphate dehydrogenase [NAD(+)]"/>
    <property type="match status" value="1"/>
</dbReference>
<dbReference type="FunFam" id="3.40.50.720:FF:000276">
    <property type="entry name" value="Glycerol-3-phosphate dehydrogenase [NAD(+)]"/>
    <property type="match status" value="1"/>
</dbReference>
<dbReference type="Gene3D" id="1.10.1040.10">
    <property type="entry name" value="N-(1-d-carboxylethyl)-l-norvaline Dehydrogenase, domain 2"/>
    <property type="match status" value="1"/>
</dbReference>
<dbReference type="Gene3D" id="3.40.50.720">
    <property type="entry name" value="NAD(P)-binding Rossmann-like Domain"/>
    <property type="match status" value="1"/>
</dbReference>
<dbReference type="InterPro" id="IPR008927">
    <property type="entry name" value="6-PGluconate_DH-like_C_sf"/>
</dbReference>
<dbReference type="InterPro" id="IPR013328">
    <property type="entry name" value="6PGD_dom2"/>
</dbReference>
<dbReference type="InterPro" id="IPR006168">
    <property type="entry name" value="G3P_DH_NAD-dep"/>
</dbReference>
<dbReference type="InterPro" id="IPR006109">
    <property type="entry name" value="G3P_DH_NAD-dep_C"/>
</dbReference>
<dbReference type="InterPro" id="IPR017751">
    <property type="entry name" value="G3P_DH_NAD-dep_euk"/>
</dbReference>
<dbReference type="InterPro" id="IPR011128">
    <property type="entry name" value="G3P_DH_NAD-dep_N"/>
</dbReference>
<dbReference type="InterPro" id="IPR036291">
    <property type="entry name" value="NAD(P)-bd_dom_sf"/>
</dbReference>
<dbReference type="NCBIfam" id="TIGR03376">
    <property type="entry name" value="glycerol3P_DH"/>
    <property type="match status" value="1"/>
</dbReference>
<dbReference type="PANTHER" id="PTHR11728">
    <property type="entry name" value="GLYCEROL-3-PHOSPHATE DEHYDROGENASE"/>
    <property type="match status" value="1"/>
</dbReference>
<dbReference type="PANTHER" id="PTHR11728:SF8">
    <property type="entry name" value="GLYCEROL-3-PHOSPHATE DEHYDROGENASE [NAD(+)]-RELATED"/>
    <property type="match status" value="1"/>
</dbReference>
<dbReference type="Pfam" id="PF07479">
    <property type="entry name" value="NAD_Gly3P_dh_C"/>
    <property type="match status" value="1"/>
</dbReference>
<dbReference type="Pfam" id="PF01210">
    <property type="entry name" value="NAD_Gly3P_dh_N"/>
    <property type="match status" value="1"/>
</dbReference>
<dbReference type="PIRSF" id="PIRSF000114">
    <property type="entry name" value="Glycerol-3-P_dh"/>
    <property type="match status" value="1"/>
</dbReference>
<dbReference type="PRINTS" id="PR00077">
    <property type="entry name" value="GPDHDRGNASE"/>
</dbReference>
<dbReference type="SUPFAM" id="SSF48179">
    <property type="entry name" value="6-phosphogluconate dehydrogenase C-terminal domain-like"/>
    <property type="match status" value="1"/>
</dbReference>
<dbReference type="SUPFAM" id="SSF51735">
    <property type="entry name" value="NAD(P)-binding Rossmann-fold domains"/>
    <property type="match status" value="1"/>
</dbReference>
<dbReference type="PROSITE" id="PS00957">
    <property type="entry name" value="NAD_G3PDH"/>
    <property type="match status" value="1"/>
</dbReference>
<sequence length="400" mass="43791">MRFRSFFFSSSIFSLSHSRSPSLSSSRFSSLSAAMSPALEKSRQGNGGCNDDSKSKVTVVGSGNWGSVAAKLIASNALKLPSFHDEVRMWVFEEVLPNGEKLNDVINKTNENVKYLPGIKLGRNVVADPDLENAVKDANMLVFVTPHQFMDGICKKLDGKITGDVEAISLVKGMEVKKEGPCMISSLISKQLGINCCVLMGANIANEIAVEKFSEATVGYRGSREIADTWVQLFSTPYFMVTPVHDVEGVELCGTLKNVVAIAAGFVDGLEMGNNTKAAIMRIGLREMKALSKLLFPSVKDSTFFESCGVADVITTCLGGRNRRVAEAFAKSRGKRSFDELEAEMLQGQKLQGVSTAREVYEVLKHCGWLEMFPLFSTVHQICTGRLQPEAIVQYRENKL</sequence>
<organism>
    <name type="scientific">Arabidopsis thaliana</name>
    <name type="common">Mouse-ear cress</name>
    <dbReference type="NCBI Taxonomy" id="3702"/>
    <lineage>
        <taxon>Eukaryota</taxon>
        <taxon>Viridiplantae</taxon>
        <taxon>Streptophyta</taxon>
        <taxon>Embryophyta</taxon>
        <taxon>Tracheophyta</taxon>
        <taxon>Spermatophyta</taxon>
        <taxon>Magnoliopsida</taxon>
        <taxon>eudicotyledons</taxon>
        <taxon>Gunneridae</taxon>
        <taxon>Pentapetalae</taxon>
        <taxon>rosids</taxon>
        <taxon>malvids</taxon>
        <taxon>Brassicales</taxon>
        <taxon>Brassicaceae</taxon>
        <taxon>Camelineae</taxon>
        <taxon>Arabidopsis</taxon>
    </lineage>
</organism>
<protein>
    <recommendedName>
        <fullName>Glycerol-3-phosphate dehydrogenase [NAD(+)] 1, chloroplastic</fullName>
        <ecNumber>1.1.1.8</ecNumber>
    </recommendedName>
</protein>
<name>GPDA1_ARATH</name>
<feature type="transit peptide" description="Chloroplast" evidence="2">
    <location>
        <begin position="1"/>
        <end position="32"/>
    </location>
</feature>
<feature type="chain" id="PRO_0000287871" description="Glycerol-3-phosphate dehydrogenase [NAD(+)] 1, chloroplastic">
    <location>
        <begin position="33"/>
        <end position="400"/>
    </location>
</feature>
<feature type="active site" description="Proton acceptor" evidence="1">
    <location>
        <position position="257"/>
    </location>
</feature>
<feature type="binding site" evidence="1">
    <location>
        <begin position="61"/>
        <end position="66"/>
    </location>
    <ligand>
        <name>NAD(+)</name>
        <dbReference type="ChEBI" id="CHEBI:57540"/>
    </ligand>
</feature>
<feature type="binding site" evidence="1">
    <location>
        <position position="92"/>
    </location>
    <ligand>
        <name>NAD(+)</name>
        <dbReference type="ChEBI" id="CHEBI:57540"/>
    </ligand>
</feature>
<feature type="binding site" evidence="1">
    <location>
        <position position="149"/>
    </location>
    <ligand>
        <name>NAD(+)</name>
        <dbReference type="ChEBI" id="CHEBI:57540"/>
    </ligand>
</feature>
<feature type="binding site" evidence="1">
    <location>
        <position position="172"/>
    </location>
    <ligand>
        <name>NAD(+)</name>
        <dbReference type="ChEBI" id="CHEBI:57540"/>
    </ligand>
</feature>
<feature type="binding site" evidence="1">
    <location>
        <position position="172"/>
    </location>
    <ligand>
        <name>substrate</name>
    </ligand>
</feature>
<feature type="binding site" evidence="1">
    <location>
        <position position="205"/>
    </location>
    <ligand>
        <name>NAD(+)</name>
        <dbReference type="ChEBI" id="CHEBI:57540"/>
    </ligand>
</feature>
<feature type="binding site" evidence="1">
    <location>
        <begin position="321"/>
        <end position="322"/>
    </location>
    <ligand>
        <name>substrate</name>
    </ligand>
</feature>
<feature type="binding site" evidence="1">
    <location>
        <position position="321"/>
    </location>
    <ligand>
        <name>NAD(+)</name>
        <dbReference type="ChEBI" id="CHEBI:57540"/>
    </ligand>
</feature>
<feature type="binding site" evidence="1">
    <location>
        <position position="350"/>
    </location>
    <ligand>
        <name>NAD(+)</name>
        <dbReference type="ChEBI" id="CHEBI:57540"/>
    </ligand>
</feature>
<feature type="binding site" evidence="1">
    <location>
        <position position="352"/>
    </location>
    <ligand>
        <name>NAD(+)</name>
        <dbReference type="ChEBI" id="CHEBI:57540"/>
    </ligand>
</feature>
<comment type="function">
    <text evidence="1">Involved in glycerolipid metabolism.</text>
</comment>
<comment type="catalytic activity">
    <reaction>
        <text>sn-glycerol 3-phosphate + NAD(+) = dihydroxyacetone phosphate + NADH + H(+)</text>
        <dbReference type="Rhea" id="RHEA:11092"/>
        <dbReference type="ChEBI" id="CHEBI:15378"/>
        <dbReference type="ChEBI" id="CHEBI:57540"/>
        <dbReference type="ChEBI" id="CHEBI:57597"/>
        <dbReference type="ChEBI" id="CHEBI:57642"/>
        <dbReference type="ChEBI" id="CHEBI:57945"/>
        <dbReference type="EC" id="1.1.1.8"/>
    </reaction>
</comment>
<comment type="biophysicochemical properties">
    <kinetics>
        <KM evidence="3">12.8 uM for glycerone phosphate</KM>
        <Vmax evidence="3">3.2 umol/sec/mg enzyme toward glycerone phosphate</Vmax>
    </kinetics>
</comment>
<comment type="pathway">
    <text>Membrane lipid metabolism; glycerophospholipid metabolism.</text>
</comment>
<comment type="subcellular location">
    <subcellularLocation>
        <location evidence="3">Plastid</location>
        <location evidence="3">Chloroplast</location>
    </subcellularLocation>
</comment>
<comment type="tissue specificity">
    <text evidence="3">Expressed in young seedlings, flowers and siliques. Expressed at low levels in roots.</text>
</comment>
<comment type="similarity">
    <text evidence="4">Belongs to the NAD-dependent glycerol-3-phosphate dehydrogenase family.</text>
</comment>
<proteinExistence type="evidence at protein level"/>
<keyword id="KW-0150">Chloroplast</keyword>
<keyword id="KW-0444">Lipid biosynthesis</keyword>
<keyword id="KW-0443">Lipid metabolism</keyword>
<keyword id="KW-0520">NAD</keyword>
<keyword id="KW-0560">Oxidoreductase</keyword>
<keyword id="KW-0594">Phospholipid biosynthesis</keyword>
<keyword id="KW-1208">Phospholipid metabolism</keyword>
<keyword id="KW-0934">Plastid</keyword>
<keyword id="KW-1185">Reference proteome</keyword>
<keyword id="KW-0809">Transit peptide</keyword>
<reference key="1">
    <citation type="journal article" date="2001" name="Plant Physiol. Biochem.">
        <title>Molecular and biochemical characterizations of a plastidic glycerol-3-phosphate dehydrogenase from Arabidopsis.</title>
        <authorList>
            <person name="Wei Y."/>
            <person name="Periappuram C."/>
            <person name="Datla R."/>
            <person name="Selvaraj G."/>
            <person name="Zou J."/>
        </authorList>
    </citation>
    <scope>NUCLEOTIDE SEQUENCE [MRNA]</scope>
    <scope>BIOPHYSICOCHEMICAL PROPERTIES</scope>
    <scope>SUBCELLULAR LOCATION</scope>
    <scope>TISSUE SPECIFICITY</scope>
    <source>
        <strain>cv. Columbia</strain>
    </source>
</reference>
<reference key="2">
    <citation type="journal article" date="1998" name="DNA Res.">
        <title>Structural analysis of Arabidopsis thaliana chromosome 5. IV. Sequence features of the regions of 1,456,315 bp covered by nineteen physically assigned P1 and TAC clones.</title>
        <authorList>
            <person name="Sato S."/>
            <person name="Kaneko T."/>
            <person name="Kotani H."/>
            <person name="Nakamura Y."/>
            <person name="Asamizu E."/>
            <person name="Miyajima N."/>
            <person name="Tabata S."/>
        </authorList>
    </citation>
    <scope>NUCLEOTIDE SEQUENCE [LARGE SCALE GENOMIC DNA]</scope>
    <source>
        <strain>cv. Columbia</strain>
    </source>
</reference>
<reference key="3">
    <citation type="journal article" date="2017" name="Plant J.">
        <title>Araport11: a complete reannotation of the Arabidopsis thaliana reference genome.</title>
        <authorList>
            <person name="Cheng C.Y."/>
            <person name="Krishnakumar V."/>
            <person name="Chan A.P."/>
            <person name="Thibaud-Nissen F."/>
            <person name="Schobel S."/>
            <person name="Town C.D."/>
        </authorList>
    </citation>
    <scope>GENOME REANNOTATION</scope>
    <source>
        <strain>cv. Columbia</strain>
    </source>
</reference>
<reference key="4">
    <citation type="journal article" date="2003" name="Science">
        <title>Empirical analysis of transcriptional activity in the Arabidopsis genome.</title>
        <authorList>
            <person name="Yamada K."/>
            <person name="Lim J."/>
            <person name="Dale J.M."/>
            <person name="Chen H."/>
            <person name="Shinn P."/>
            <person name="Palm C.J."/>
            <person name="Southwick A.M."/>
            <person name="Wu H.C."/>
            <person name="Kim C.J."/>
            <person name="Nguyen M."/>
            <person name="Pham P.K."/>
            <person name="Cheuk R.F."/>
            <person name="Karlin-Newmann G."/>
            <person name="Liu S.X."/>
            <person name="Lam B."/>
            <person name="Sakano H."/>
            <person name="Wu T."/>
            <person name="Yu G."/>
            <person name="Miranda M."/>
            <person name="Quach H.L."/>
            <person name="Tripp M."/>
            <person name="Chang C.H."/>
            <person name="Lee J.M."/>
            <person name="Toriumi M.J."/>
            <person name="Chan M.M."/>
            <person name="Tang C.C."/>
            <person name="Onodera C.S."/>
            <person name="Deng J.M."/>
            <person name="Akiyama K."/>
            <person name="Ansari Y."/>
            <person name="Arakawa T."/>
            <person name="Banh J."/>
            <person name="Banno F."/>
            <person name="Bowser L."/>
            <person name="Brooks S.Y."/>
            <person name="Carninci P."/>
            <person name="Chao Q."/>
            <person name="Choy N."/>
            <person name="Enju A."/>
            <person name="Goldsmith A.D."/>
            <person name="Gurjal M."/>
            <person name="Hansen N.F."/>
            <person name="Hayashizaki Y."/>
            <person name="Johnson-Hopson C."/>
            <person name="Hsuan V.W."/>
            <person name="Iida K."/>
            <person name="Karnes M."/>
            <person name="Khan S."/>
            <person name="Koesema E."/>
            <person name="Ishida J."/>
            <person name="Jiang P.X."/>
            <person name="Jones T."/>
            <person name="Kawai J."/>
            <person name="Kamiya A."/>
            <person name="Meyers C."/>
            <person name="Nakajima M."/>
            <person name="Narusaka M."/>
            <person name="Seki M."/>
            <person name="Sakurai T."/>
            <person name="Satou M."/>
            <person name="Tamse R."/>
            <person name="Vaysberg M."/>
            <person name="Wallender E.K."/>
            <person name="Wong C."/>
            <person name="Yamamura Y."/>
            <person name="Yuan S."/>
            <person name="Shinozaki K."/>
            <person name="Davis R.W."/>
            <person name="Theologis A."/>
            <person name="Ecker J.R."/>
        </authorList>
    </citation>
    <scope>NUCLEOTIDE SEQUENCE [LARGE SCALE MRNA]</scope>
    <source>
        <strain>cv. Columbia</strain>
    </source>
</reference>